<comment type="function">
    <text evidence="1">NDH-1 shuttles electrons from an unknown electron donor, via FMN and iron-sulfur (Fe-S) centers, to quinones in the respiratory and/or the photosynthetic chain. The immediate electron acceptor for the enzyme in this species is believed to be plastoquinone. Couples the redox reaction to proton translocation, and thus conserves the redox energy in a proton gradient. Cyanobacterial NDH-1 also plays a role in inorganic carbon-concentration.</text>
</comment>
<comment type="catalytic activity">
    <reaction evidence="1">
        <text>a plastoquinone + NADH + (n+1) H(+)(in) = a plastoquinol + NAD(+) + n H(+)(out)</text>
        <dbReference type="Rhea" id="RHEA:42608"/>
        <dbReference type="Rhea" id="RHEA-COMP:9561"/>
        <dbReference type="Rhea" id="RHEA-COMP:9562"/>
        <dbReference type="ChEBI" id="CHEBI:15378"/>
        <dbReference type="ChEBI" id="CHEBI:17757"/>
        <dbReference type="ChEBI" id="CHEBI:57540"/>
        <dbReference type="ChEBI" id="CHEBI:57945"/>
        <dbReference type="ChEBI" id="CHEBI:62192"/>
    </reaction>
</comment>
<comment type="catalytic activity">
    <reaction evidence="1">
        <text>a plastoquinone + NADPH + (n+1) H(+)(in) = a plastoquinol + NADP(+) + n H(+)(out)</text>
        <dbReference type="Rhea" id="RHEA:42612"/>
        <dbReference type="Rhea" id="RHEA-COMP:9561"/>
        <dbReference type="Rhea" id="RHEA-COMP:9562"/>
        <dbReference type="ChEBI" id="CHEBI:15378"/>
        <dbReference type="ChEBI" id="CHEBI:17757"/>
        <dbReference type="ChEBI" id="CHEBI:57783"/>
        <dbReference type="ChEBI" id="CHEBI:58349"/>
        <dbReference type="ChEBI" id="CHEBI:62192"/>
    </reaction>
</comment>
<comment type="cofactor">
    <cofactor evidence="1">
        <name>[4Fe-4S] cluster</name>
        <dbReference type="ChEBI" id="CHEBI:49883"/>
    </cofactor>
    <text evidence="1">Binds 1 [4Fe-4S] cluster.</text>
</comment>
<comment type="subunit">
    <text evidence="1">NDH-1 can be composed of about 15 different subunits; different subcomplexes with different compositions have been identified which probably have different functions.</text>
</comment>
<comment type="subcellular location">
    <subcellularLocation>
        <location evidence="1">Cellular thylakoid membrane</location>
        <topology evidence="1">Peripheral membrane protein</topology>
        <orientation evidence="1">Cytoplasmic side</orientation>
    </subcellularLocation>
</comment>
<comment type="similarity">
    <text evidence="1">Belongs to the complex I 20 kDa subunit family.</text>
</comment>
<gene>
    <name evidence="1" type="primary">ndhK</name>
    <name type="ordered locus">SYNW0208</name>
</gene>
<accession>Q7U9P5</accession>
<feature type="chain" id="PRO_0000358499" description="NAD(P)H-quinone oxidoreductase subunit K">
    <location>
        <begin position="1"/>
        <end position="246"/>
    </location>
</feature>
<feature type="binding site" evidence="1">
    <location>
        <position position="62"/>
    </location>
    <ligand>
        <name>[4Fe-4S] cluster</name>
        <dbReference type="ChEBI" id="CHEBI:49883"/>
    </ligand>
</feature>
<feature type="binding site" evidence="1">
    <location>
        <position position="63"/>
    </location>
    <ligand>
        <name>[4Fe-4S] cluster</name>
        <dbReference type="ChEBI" id="CHEBI:49883"/>
    </ligand>
</feature>
<feature type="binding site" evidence="1">
    <location>
        <position position="127"/>
    </location>
    <ligand>
        <name>[4Fe-4S] cluster</name>
        <dbReference type="ChEBI" id="CHEBI:49883"/>
    </ligand>
</feature>
<feature type="binding site" evidence="1">
    <location>
        <position position="158"/>
    </location>
    <ligand>
        <name>[4Fe-4S] cluster</name>
        <dbReference type="ChEBI" id="CHEBI:49883"/>
    </ligand>
</feature>
<sequence length="246" mass="26629">MSDLTSPSITAVRDLREASCGPIGAPAVTSDLSENVILTSLDDLHNWARLSSLWPLLYGTACCFIEFAALLGSRFDFDRFGLVPRSSPRQADLLIVAGTVTMKMAPALVRLYEQMPEPKYVIAMGACTITGGMFSADSTTAVRGVDKLIPVDLYMPGCPPRPEAIFDAVIKLRKKVGDESLAERRKHVQTHRYFTVSHQMKRVEEQVTGSYLRAETQKAALAAAPAGQTLATDAAVLTPALEAVES</sequence>
<keyword id="KW-0004">4Fe-4S</keyword>
<keyword id="KW-0408">Iron</keyword>
<keyword id="KW-0411">Iron-sulfur</keyword>
<keyword id="KW-0472">Membrane</keyword>
<keyword id="KW-0479">Metal-binding</keyword>
<keyword id="KW-0520">NAD</keyword>
<keyword id="KW-0521">NADP</keyword>
<keyword id="KW-0618">Plastoquinone</keyword>
<keyword id="KW-0874">Quinone</keyword>
<keyword id="KW-0793">Thylakoid</keyword>
<keyword id="KW-1278">Translocase</keyword>
<keyword id="KW-0813">Transport</keyword>
<proteinExistence type="inferred from homology"/>
<evidence type="ECO:0000255" key="1">
    <source>
        <dbReference type="HAMAP-Rule" id="MF_01356"/>
    </source>
</evidence>
<reference key="1">
    <citation type="journal article" date="2003" name="Nature">
        <title>The genome of a motile marine Synechococcus.</title>
        <authorList>
            <person name="Palenik B."/>
            <person name="Brahamsha B."/>
            <person name="Larimer F.W."/>
            <person name="Land M.L."/>
            <person name="Hauser L."/>
            <person name="Chain P."/>
            <person name="Lamerdin J.E."/>
            <person name="Regala W."/>
            <person name="Allen E.E."/>
            <person name="McCarren J."/>
            <person name="Paulsen I.T."/>
            <person name="Dufresne A."/>
            <person name="Partensky F."/>
            <person name="Webb E.A."/>
            <person name="Waterbury J."/>
        </authorList>
    </citation>
    <scope>NUCLEOTIDE SEQUENCE [LARGE SCALE GENOMIC DNA]</scope>
    <source>
        <strain>WH8102</strain>
    </source>
</reference>
<organism>
    <name type="scientific">Parasynechococcus marenigrum (strain WH8102)</name>
    <dbReference type="NCBI Taxonomy" id="84588"/>
    <lineage>
        <taxon>Bacteria</taxon>
        <taxon>Bacillati</taxon>
        <taxon>Cyanobacteriota</taxon>
        <taxon>Cyanophyceae</taxon>
        <taxon>Synechococcales</taxon>
        <taxon>Prochlorococcaceae</taxon>
        <taxon>Parasynechococcus</taxon>
        <taxon>Parasynechococcus marenigrum</taxon>
    </lineage>
</organism>
<dbReference type="EC" id="7.1.1.-" evidence="1"/>
<dbReference type="EMBL" id="BX569689">
    <property type="protein sequence ID" value="CAE06723.1"/>
    <property type="molecule type" value="Genomic_DNA"/>
</dbReference>
<dbReference type="RefSeq" id="WP_011127084.1">
    <property type="nucleotide sequence ID" value="NC_005070.1"/>
</dbReference>
<dbReference type="SMR" id="Q7U9P5"/>
<dbReference type="STRING" id="84588.SYNW0208"/>
<dbReference type="KEGG" id="syw:SYNW0208"/>
<dbReference type="eggNOG" id="COG0377">
    <property type="taxonomic scope" value="Bacteria"/>
</dbReference>
<dbReference type="HOGENOM" id="CLU_055737_2_0_3"/>
<dbReference type="BioCyc" id="MetaCyc:TX72_RS01035-MONOMER"/>
<dbReference type="Proteomes" id="UP000001422">
    <property type="component" value="Chromosome"/>
</dbReference>
<dbReference type="GO" id="GO:0031676">
    <property type="term" value="C:plasma membrane-derived thylakoid membrane"/>
    <property type="evidence" value="ECO:0007669"/>
    <property type="project" value="UniProtKB-SubCell"/>
</dbReference>
<dbReference type="GO" id="GO:0045271">
    <property type="term" value="C:respiratory chain complex I"/>
    <property type="evidence" value="ECO:0007669"/>
    <property type="project" value="TreeGrafter"/>
</dbReference>
<dbReference type="GO" id="GO:0051539">
    <property type="term" value="F:4 iron, 4 sulfur cluster binding"/>
    <property type="evidence" value="ECO:0007669"/>
    <property type="project" value="UniProtKB-KW"/>
</dbReference>
<dbReference type="GO" id="GO:0005506">
    <property type="term" value="F:iron ion binding"/>
    <property type="evidence" value="ECO:0007669"/>
    <property type="project" value="UniProtKB-UniRule"/>
</dbReference>
<dbReference type="GO" id="GO:0008137">
    <property type="term" value="F:NADH dehydrogenase (ubiquinone) activity"/>
    <property type="evidence" value="ECO:0007669"/>
    <property type="project" value="InterPro"/>
</dbReference>
<dbReference type="GO" id="GO:0048038">
    <property type="term" value="F:quinone binding"/>
    <property type="evidence" value="ECO:0007669"/>
    <property type="project" value="UniProtKB-KW"/>
</dbReference>
<dbReference type="GO" id="GO:0009060">
    <property type="term" value="P:aerobic respiration"/>
    <property type="evidence" value="ECO:0007669"/>
    <property type="project" value="TreeGrafter"/>
</dbReference>
<dbReference type="GO" id="GO:0015990">
    <property type="term" value="P:electron transport coupled proton transport"/>
    <property type="evidence" value="ECO:0007669"/>
    <property type="project" value="TreeGrafter"/>
</dbReference>
<dbReference type="GO" id="GO:0019684">
    <property type="term" value="P:photosynthesis, light reaction"/>
    <property type="evidence" value="ECO:0007669"/>
    <property type="project" value="UniProtKB-UniRule"/>
</dbReference>
<dbReference type="FunFam" id="3.40.50.12280:FF:000003">
    <property type="entry name" value="NAD(P)H-quinone oxidoreductase subunit K, chloroplastic"/>
    <property type="match status" value="1"/>
</dbReference>
<dbReference type="Gene3D" id="3.40.50.12280">
    <property type="match status" value="1"/>
</dbReference>
<dbReference type="HAMAP" id="MF_01356">
    <property type="entry name" value="NDH1_NuoB"/>
    <property type="match status" value="1"/>
</dbReference>
<dbReference type="InterPro" id="IPR006137">
    <property type="entry name" value="NADH_UbQ_OxRdtase-like_20kDa"/>
</dbReference>
<dbReference type="InterPro" id="IPR006138">
    <property type="entry name" value="NADH_UQ_OxRdtase_20Kd_su"/>
</dbReference>
<dbReference type="NCBIfam" id="TIGR01957">
    <property type="entry name" value="nuoB_fam"/>
    <property type="match status" value="1"/>
</dbReference>
<dbReference type="NCBIfam" id="NF005012">
    <property type="entry name" value="PRK06411.1"/>
    <property type="match status" value="1"/>
</dbReference>
<dbReference type="PANTHER" id="PTHR11995">
    <property type="entry name" value="NADH DEHYDROGENASE"/>
    <property type="match status" value="1"/>
</dbReference>
<dbReference type="PANTHER" id="PTHR11995:SF14">
    <property type="entry name" value="NADH DEHYDROGENASE [UBIQUINONE] IRON-SULFUR PROTEIN 7, MITOCHONDRIAL"/>
    <property type="match status" value="1"/>
</dbReference>
<dbReference type="Pfam" id="PF01058">
    <property type="entry name" value="Oxidored_q6"/>
    <property type="match status" value="1"/>
</dbReference>
<dbReference type="SUPFAM" id="SSF56770">
    <property type="entry name" value="HydA/Nqo6-like"/>
    <property type="match status" value="1"/>
</dbReference>
<dbReference type="PROSITE" id="PS01150">
    <property type="entry name" value="COMPLEX1_20K"/>
    <property type="match status" value="1"/>
</dbReference>
<protein>
    <recommendedName>
        <fullName evidence="1">NAD(P)H-quinone oxidoreductase subunit K</fullName>
        <ecNumber evidence="1">7.1.1.-</ecNumber>
    </recommendedName>
    <alternativeName>
        <fullName evidence="1">NAD(P)H dehydrogenase I subunit K</fullName>
    </alternativeName>
    <alternativeName>
        <fullName evidence="1">NDH-1 subunit K</fullName>
        <shortName evidence="1">NDH-K</shortName>
    </alternativeName>
</protein>
<name>NDHK_PARMW</name>